<protein>
    <recommendedName>
        <fullName evidence="1">Cytochrome c-type biogenesis protein CcmE</fullName>
    </recommendedName>
    <alternativeName>
        <fullName evidence="1">Cytochrome c maturation protein E</fullName>
    </alternativeName>
    <alternativeName>
        <fullName evidence="1">Heme chaperone CcmE</fullName>
    </alternativeName>
</protein>
<comment type="function">
    <text evidence="1">Heme chaperone required for the biogenesis of c-type cytochromes. Transiently binds heme delivered by CcmC and transfers the heme to apo-cytochromes in a process facilitated by CcmF and CcmH.</text>
</comment>
<comment type="subcellular location">
    <subcellularLocation>
        <location evidence="1">Cell inner membrane</location>
        <topology evidence="1">Single-pass type II membrane protein</topology>
        <orientation evidence="1">Periplasmic side</orientation>
    </subcellularLocation>
</comment>
<comment type="similarity">
    <text evidence="1">Belongs to the CcmE/CycJ family.</text>
</comment>
<feature type="chain" id="PRO_1000088520" description="Cytochrome c-type biogenesis protein CcmE">
    <location>
        <begin position="1"/>
        <end position="159"/>
    </location>
</feature>
<feature type="topological domain" description="Cytoplasmic" evidence="1">
    <location>
        <begin position="1"/>
        <end position="23"/>
    </location>
</feature>
<feature type="transmembrane region" description="Helical; Signal-anchor for type II membrane protein" evidence="1">
    <location>
        <begin position="24"/>
        <end position="44"/>
    </location>
</feature>
<feature type="topological domain" description="Periplasmic" evidence="1">
    <location>
        <begin position="45"/>
        <end position="159"/>
    </location>
</feature>
<feature type="binding site" description="covalent" evidence="1">
    <location>
        <position position="138"/>
    </location>
    <ligand>
        <name>heme</name>
        <dbReference type="ChEBI" id="CHEBI:30413"/>
    </ligand>
</feature>
<feature type="binding site" description="axial binding residue" evidence="1">
    <location>
        <position position="142"/>
    </location>
    <ligand>
        <name>heme</name>
        <dbReference type="ChEBI" id="CHEBI:30413"/>
    </ligand>
    <ligandPart>
        <name>Fe</name>
        <dbReference type="ChEBI" id="CHEBI:18248"/>
    </ligandPart>
</feature>
<proteinExistence type="inferred from homology"/>
<organism>
    <name type="scientific">Bartonella tribocorum (strain CIP 105476 / IBS 506)</name>
    <dbReference type="NCBI Taxonomy" id="382640"/>
    <lineage>
        <taxon>Bacteria</taxon>
        <taxon>Pseudomonadati</taxon>
        <taxon>Pseudomonadota</taxon>
        <taxon>Alphaproteobacteria</taxon>
        <taxon>Hyphomicrobiales</taxon>
        <taxon>Bartonellaceae</taxon>
        <taxon>Bartonella</taxon>
    </lineage>
</organism>
<keyword id="KW-0997">Cell inner membrane</keyword>
<keyword id="KW-1003">Cell membrane</keyword>
<keyword id="KW-0201">Cytochrome c-type biogenesis</keyword>
<keyword id="KW-0349">Heme</keyword>
<keyword id="KW-0408">Iron</keyword>
<keyword id="KW-0472">Membrane</keyword>
<keyword id="KW-0479">Metal-binding</keyword>
<keyword id="KW-0735">Signal-anchor</keyword>
<keyword id="KW-0812">Transmembrane</keyword>
<keyword id="KW-1133">Transmembrane helix</keyword>
<accession>A9IR17</accession>
<evidence type="ECO:0000255" key="1">
    <source>
        <dbReference type="HAMAP-Rule" id="MF_01959"/>
    </source>
</evidence>
<reference key="1">
    <citation type="journal article" date="2007" name="Nat. Genet.">
        <title>Genomic analysis of Bartonella identifies type IV secretion systems as host adaptability factors.</title>
        <authorList>
            <person name="Saenz H.L."/>
            <person name="Engel P."/>
            <person name="Stoeckli M.C."/>
            <person name="Lanz C."/>
            <person name="Raddatz G."/>
            <person name="Vayssier-Taussat M."/>
            <person name="Birtles R."/>
            <person name="Schuster S.C."/>
            <person name="Dehio C."/>
        </authorList>
    </citation>
    <scope>NUCLEOTIDE SEQUENCE [LARGE SCALE GENOMIC DNA]</scope>
    <source>
        <strain>CIP 105476 / IBS 506</strain>
    </source>
</reference>
<dbReference type="EMBL" id="AM260525">
    <property type="protein sequence ID" value="CAK01127.1"/>
    <property type="molecule type" value="Genomic_DNA"/>
</dbReference>
<dbReference type="RefSeq" id="WP_012231238.1">
    <property type="nucleotide sequence ID" value="NC_010161.1"/>
</dbReference>
<dbReference type="SMR" id="A9IR17"/>
<dbReference type="KEGG" id="btr:BT_0701"/>
<dbReference type="eggNOG" id="COG2332">
    <property type="taxonomic scope" value="Bacteria"/>
</dbReference>
<dbReference type="HOGENOM" id="CLU_079503_1_1_5"/>
<dbReference type="Proteomes" id="UP000001592">
    <property type="component" value="Chromosome"/>
</dbReference>
<dbReference type="GO" id="GO:0005886">
    <property type="term" value="C:plasma membrane"/>
    <property type="evidence" value="ECO:0007669"/>
    <property type="project" value="UniProtKB-SubCell"/>
</dbReference>
<dbReference type="GO" id="GO:0020037">
    <property type="term" value="F:heme binding"/>
    <property type="evidence" value="ECO:0007669"/>
    <property type="project" value="InterPro"/>
</dbReference>
<dbReference type="GO" id="GO:0046872">
    <property type="term" value="F:metal ion binding"/>
    <property type="evidence" value="ECO:0007669"/>
    <property type="project" value="UniProtKB-KW"/>
</dbReference>
<dbReference type="GO" id="GO:0017004">
    <property type="term" value="P:cytochrome complex assembly"/>
    <property type="evidence" value="ECO:0007669"/>
    <property type="project" value="UniProtKB-KW"/>
</dbReference>
<dbReference type="Gene3D" id="2.40.50.140">
    <property type="entry name" value="Nucleic acid-binding proteins"/>
    <property type="match status" value="1"/>
</dbReference>
<dbReference type="HAMAP" id="MF_01959">
    <property type="entry name" value="CcmE"/>
    <property type="match status" value="1"/>
</dbReference>
<dbReference type="InterPro" id="IPR004329">
    <property type="entry name" value="CcmE"/>
</dbReference>
<dbReference type="InterPro" id="IPR036127">
    <property type="entry name" value="CcmE-like_sf"/>
</dbReference>
<dbReference type="InterPro" id="IPR012340">
    <property type="entry name" value="NA-bd_OB-fold"/>
</dbReference>
<dbReference type="NCBIfam" id="NF009727">
    <property type="entry name" value="PRK13254.1-1"/>
    <property type="match status" value="1"/>
</dbReference>
<dbReference type="NCBIfam" id="NF009731">
    <property type="entry name" value="PRK13254.1-5"/>
    <property type="match status" value="1"/>
</dbReference>
<dbReference type="PANTHER" id="PTHR34128">
    <property type="entry name" value="CYTOCHROME C-TYPE BIOGENESIS PROTEIN CCME HOMOLOG, MITOCHONDRIAL"/>
    <property type="match status" value="1"/>
</dbReference>
<dbReference type="PANTHER" id="PTHR34128:SF2">
    <property type="entry name" value="CYTOCHROME C-TYPE BIOGENESIS PROTEIN CCME HOMOLOG, MITOCHONDRIAL"/>
    <property type="match status" value="1"/>
</dbReference>
<dbReference type="Pfam" id="PF03100">
    <property type="entry name" value="CcmE"/>
    <property type="match status" value="1"/>
</dbReference>
<dbReference type="SUPFAM" id="SSF82093">
    <property type="entry name" value="Heme chaperone CcmE"/>
    <property type="match status" value="1"/>
</dbReference>
<gene>
    <name evidence="1" type="primary">ccmE</name>
    <name evidence="1" type="synonym">cycJ</name>
    <name type="ordered locus">BT_0701</name>
</gene>
<sequence>MNNSSLENSASLKVILKQRKKKRLLIILLCCLVMAIAASLVVYAMRHAVSFFRMPSEITREDILTGRPLRLGGFVEKGTVRYVGESGVIFFVTDNKKHEKVVFNGALPDLFREGQGVIVEGHFDKQGFFIGTRILAKHDATYMPKETVDRLKKHYSVEK</sequence>
<name>CCME_BART1</name>